<accession>Q7UZV1</accession>
<feature type="chain" id="PRO_0000125203" description="Large ribosomal subunit protein uL22">
    <location>
        <begin position="1"/>
        <end position="128"/>
    </location>
</feature>
<proteinExistence type="inferred from homology"/>
<dbReference type="EMBL" id="BX548174">
    <property type="protein sequence ID" value="CAE20012.1"/>
    <property type="molecule type" value="Genomic_DNA"/>
</dbReference>
<dbReference type="RefSeq" id="WP_011133181.1">
    <property type="nucleotide sequence ID" value="NC_005072.1"/>
</dbReference>
<dbReference type="SMR" id="Q7UZV1"/>
<dbReference type="STRING" id="59919.PMM1553"/>
<dbReference type="KEGG" id="pmm:PMM1553"/>
<dbReference type="eggNOG" id="COG0091">
    <property type="taxonomic scope" value="Bacteria"/>
</dbReference>
<dbReference type="HOGENOM" id="CLU_083987_3_3_3"/>
<dbReference type="OrthoDB" id="9805969at2"/>
<dbReference type="Proteomes" id="UP000001026">
    <property type="component" value="Chromosome"/>
</dbReference>
<dbReference type="GO" id="GO:0022625">
    <property type="term" value="C:cytosolic large ribosomal subunit"/>
    <property type="evidence" value="ECO:0007669"/>
    <property type="project" value="TreeGrafter"/>
</dbReference>
<dbReference type="GO" id="GO:0019843">
    <property type="term" value="F:rRNA binding"/>
    <property type="evidence" value="ECO:0007669"/>
    <property type="project" value="UniProtKB-UniRule"/>
</dbReference>
<dbReference type="GO" id="GO:0003735">
    <property type="term" value="F:structural constituent of ribosome"/>
    <property type="evidence" value="ECO:0007669"/>
    <property type="project" value="InterPro"/>
</dbReference>
<dbReference type="GO" id="GO:0006412">
    <property type="term" value="P:translation"/>
    <property type="evidence" value="ECO:0007669"/>
    <property type="project" value="UniProtKB-UniRule"/>
</dbReference>
<dbReference type="CDD" id="cd00336">
    <property type="entry name" value="Ribosomal_L22"/>
    <property type="match status" value="1"/>
</dbReference>
<dbReference type="Gene3D" id="3.90.470.10">
    <property type="entry name" value="Ribosomal protein L22/L17"/>
    <property type="match status" value="1"/>
</dbReference>
<dbReference type="HAMAP" id="MF_01331_B">
    <property type="entry name" value="Ribosomal_uL22_B"/>
    <property type="match status" value="1"/>
</dbReference>
<dbReference type="InterPro" id="IPR001063">
    <property type="entry name" value="Ribosomal_uL22"/>
</dbReference>
<dbReference type="InterPro" id="IPR005727">
    <property type="entry name" value="Ribosomal_uL22_bac/chlpt-type"/>
</dbReference>
<dbReference type="InterPro" id="IPR047867">
    <property type="entry name" value="Ribosomal_uL22_bac/org-type"/>
</dbReference>
<dbReference type="InterPro" id="IPR018260">
    <property type="entry name" value="Ribosomal_uL22_CS"/>
</dbReference>
<dbReference type="InterPro" id="IPR036394">
    <property type="entry name" value="Ribosomal_uL22_sf"/>
</dbReference>
<dbReference type="NCBIfam" id="TIGR01044">
    <property type="entry name" value="rplV_bact"/>
    <property type="match status" value="1"/>
</dbReference>
<dbReference type="PANTHER" id="PTHR13501">
    <property type="entry name" value="CHLOROPLAST 50S RIBOSOMAL PROTEIN L22-RELATED"/>
    <property type="match status" value="1"/>
</dbReference>
<dbReference type="PANTHER" id="PTHR13501:SF8">
    <property type="entry name" value="LARGE RIBOSOMAL SUBUNIT PROTEIN UL22M"/>
    <property type="match status" value="1"/>
</dbReference>
<dbReference type="Pfam" id="PF00237">
    <property type="entry name" value="Ribosomal_L22"/>
    <property type="match status" value="1"/>
</dbReference>
<dbReference type="SUPFAM" id="SSF54843">
    <property type="entry name" value="Ribosomal protein L22"/>
    <property type="match status" value="1"/>
</dbReference>
<dbReference type="PROSITE" id="PS00464">
    <property type="entry name" value="RIBOSOMAL_L22"/>
    <property type="match status" value="1"/>
</dbReference>
<organism>
    <name type="scientific">Prochlorococcus marinus subsp. pastoris (strain CCMP1986 / NIES-2087 / MED4)</name>
    <dbReference type="NCBI Taxonomy" id="59919"/>
    <lineage>
        <taxon>Bacteria</taxon>
        <taxon>Bacillati</taxon>
        <taxon>Cyanobacteriota</taxon>
        <taxon>Cyanophyceae</taxon>
        <taxon>Synechococcales</taxon>
        <taxon>Prochlorococcaceae</taxon>
        <taxon>Prochlorococcus</taxon>
    </lineage>
</organism>
<keyword id="KW-0687">Ribonucleoprotein</keyword>
<keyword id="KW-0689">Ribosomal protein</keyword>
<keyword id="KW-0694">RNA-binding</keyword>
<keyword id="KW-0699">rRNA-binding</keyword>
<evidence type="ECO:0000255" key="1">
    <source>
        <dbReference type="HAMAP-Rule" id="MF_01331"/>
    </source>
</evidence>
<evidence type="ECO:0000305" key="2"/>
<comment type="function">
    <text evidence="1">This protein binds specifically to 23S rRNA; its binding is stimulated by other ribosomal proteins, e.g. L4, L17, and L20. It is important during the early stages of 50S assembly. It makes multiple contacts with different domains of the 23S rRNA in the assembled 50S subunit and ribosome (By similarity).</text>
</comment>
<comment type="function">
    <text evidence="1">The globular domain of the protein is located near the polypeptide exit tunnel on the outside of the subunit, while an extended beta-hairpin is found that lines the wall of the exit tunnel in the center of the 70S ribosome.</text>
</comment>
<comment type="subunit">
    <text evidence="1">Part of the 50S ribosomal subunit.</text>
</comment>
<comment type="similarity">
    <text evidence="1">Belongs to the universal ribosomal protein uL22 family.</text>
</comment>
<sequence>MTKTPEMTKTAIAHGKYIRGSASKVRRVLDQIRGKSYRDALIMLEFMPYRSTDPITKVLRSAVANAEHNLGMDPSSLVISSASADNGPVMKRFRPRAQGRAFSIKKQTCHISISVESAPNQTNTEAQN</sequence>
<protein>
    <recommendedName>
        <fullName evidence="1">Large ribosomal subunit protein uL22</fullName>
    </recommendedName>
    <alternativeName>
        <fullName evidence="2">50S ribosomal protein L22</fullName>
    </alternativeName>
</protein>
<reference key="1">
    <citation type="journal article" date="2003" name="Nature">
        <title>Genome divergence in two Prochlorococcus ecotypes reflects oceanic niche differentiation.</title>
        <authorList>
            <person name="Rocap G."/>
            <person name="Larimer F.W."/>
            <person name="Lamerdin J.E."/>
            <person name="Malfatti S."/>
            <person name="Chain P."/>
            <person name="Ahlgren N.A."/>
            <person name="Arellano A."/>
            <person name="Coleman M."/>
            <person name="Hauser L."/>
            <person name="Hess W.R."/>
            <person name="Johnson Z.I."/>
            <person name="Land M.L."/>
            <person name="Lindell D."/>
            <person name="Post A.F."/>
            <person name="Regala W."/>
            <person name="Shah M."/>
            <person name="Shaw S.L."/>
            <person name="Steglich C."/>
            <person name="Sullivan M.B."/>
            <person name="Ting C.S."/>
            <person name="Tolonen A."/>
            <person name="Webb E.A."/>
            <person name="Zinser E.R."/>
            <person name="Chisholm S.W."/>
        </authorList>
    </citation>
    <scope>NUCLEOTIDE SEQUENCE [LARGE SCALE GENOMIC DNA]</scope>
    <source>
        <strain>CCMP1986 / NIES-2087 / MED4</strain>
    </source>
</reference>
<name>RL22_PROMP</name>
<gene>
    <name evidence="1" type="primary">rplV</name>
    <name evidence="1" type="synonym">rpl22</name>
    <name type="ordered locus">PMM1553</name>
</gene>